<protein>
    <recommendedName>
        <fullName evidence="1">UPF0303 protein BCG9842_B1842</fullName>
    </recommendedName>
</protein>
<accession>B7IPP9</accession>
<organism>
    <name type="scientific">Bacillus cereus (strain G9842)</name>
    <dbReference type="NCBI Taxonomy" id="405531"/>
    <lineage>
        <taxon>Bacteria</taxon>
        <taxon>Bacillati</taxon>
        <taxon>Bacillota</taxon>
        <taxon>Bacilli</taxon>
        <taxon>Bacillales</taxon>
        <taxon>Bacillaceae</taxon>
        <taxon>Bacillus</taxon>
        <taxon>Bacillus cereus group</taxon>
    </lineage>
</organism>
<sequence length="158" mass="17939">MSTSNLNEISKRILIEEETLQFSSFTNEDALQLGLFIVETAKKEGKLIAADITKNGVQLFHFKMTGTNEENTKWIERKKRVVSLHDHSSYYMQIQSEITGISYNEKYLLDTSEYAAFGGCFPIRIKDVGVIGMITVSGLPPEEDHELVIRAVKNHLKQ</sequence>
<evidence type="ECO:0000255" key="1">
    <source>
        <dbReference type="HAMAP-Rule" id="MF_00761"/>
    </source>
</evidence>
<dbReference type="EMBL" id="CP001186">
    <property type="protein sequence ID" value="ACK93408.1"/>
    <property type="molecule type" value="Genomic_DNA"/>
</dbReference>
<dbReference type="SMR" id="B7IPP9"/>
<dbReference type="KEGG" id="bcg:BCG9842_B1842"/>
<dbReference type="HOGENOM" id="CLU_101036_2_0_9"/>
<dbReference type="Proteomes" id="UP000006744">
    <property type="component" value="Chromosome"/>
</dbReference>
<dbReference type="Gene3D" id="3.30.450.150">
    <property type="entry name" value="Haem-degrading domain"/>
    <property type="match status" value="1"/>
</dbReference>
<dbReference type="HAMAP" id="MF_00761">
    <property type="entry name" value="UPF0303"/>
    <property type="match status" value="1"/>
</dbReference>
<dbReference type="InterPro" id="IPR005624">
    <property type="entry name" value="PduO/GlcC-like"/>
</dbReference>
<dbReference type="InterPro" id="IPR038084">
    <property type="entry name" value="PduO/GlcC-like_sf"/>
</dbReference>
<dbReference type="InterPro" id="IPR010371">
    <property type="entry name" value="YBR137W-like"/>
</dbReference>
<dbReference type="NCBIfam" id="NF002692">
    <property type="entry name" value="PRK02487.1-1"/>
    <property type="match status" value="1"/>
</dbReference>
<dbReference type="NCBIfam" id="NF002696">
    <property type="entry name" value="PRK02487.1-5"/>
    <property type="match status" value="1"/>
</dbReference>
<dbReference type="PANTHER" id="PTHR28255">
    <property type="match status" value="1"/>
</dbReference>
<dbReference type="PANTHER" id="PTHR28255:SF1">
    <property type="entry name" value="UPF0303 PROTEIN YBR137W"/>
    <property type="match status" value="1"/>
</dbReference>
<dbReference type="Pfam" id="PF03928">
    <property type="entry name" value="HbpS-like"/>
    <property type="match status" value="1"/>
</dbReference>
<dbReference type="PIRSF" id="PIRSF008757">
    <property type="entry name" value="UCP008757"/>
    <property type="match status" value="1"/>
</dbReference>
<dbReference type="SUPFAM" id="SSF143744">
    <property type="entry name" value="GlcG-like"/>
    <property type="match status" value="1"/>
</dbReference>
<gene>
    <name type="ordered locus">BCG9842_B1842</name>
</gene>
<name>Y1842_BACC2</name>
<comment type="similarity">
    <text evidence="1">Belongs to the UPF0303 family.</text>
</comment>
<proteinExistence type="inferred from homology"/>
<feature type="chain" id="PRO_1000198319" description="UPF0303 protein BCG9842_B1842">
    <location>
        <begin position="1"/>
        <end position="158"/>
    </location>
</feature>
<reference key="1">
    <citation type="submission" date="2008-10" db="EMBL/GenBank/DDBJ databases">
        <title>Genome sequence of Bacillus cereus G9842.</title>
        <authorList>
            <person name="Dodson R.J."/>
            <person name="Durkin A.S."/>
            <person name="Rosovitz M.J."/>
            <person name="Rasko D.A."/>
            <person name="Hoffmaster A."/>
            <person name="Ravel J."/>
            <person name="Sutton G."/>
        </authorList>
    </citation>
    <scope>NUCLEOTIDE SEQUENCE [LARGE SCALE GENOMIC DNA]</scope>
    <source>
        <strain>G9842</strain>
    </source>
</reference>